<sequence>MDSNTVSSFQVDCFLWHIRKRFADNGLGDAPFLDRLRRDQKSLRGRGSTLGLNIETATLAGKQIVEWILKEESNETLKMTIASVPSSRYLADMTLEEMSRDWFMLMPKQKVAGSLYIRMDQAIMEKNIILKANFSVIFDRLETLILLRAFTEEGAIVGEISPLPSLPGHTDEDVKNAVEVLIGGLEWNGNTVRVSENLQRFAWRSRNENGRPSLPPEQK</sequence>
<feature type="chain" id="PRO_0000372988" description="Non-structural protein 1">
    <location>
        <begin position="1"/>
        <end position="219" status="greater than"/>
    </location>
</feature>
<feature type="region of interest" description="RNA-binding and homodimerization" evidence="1">
    <location>
        <begin position="1"/>
        <end position="73"/>
    </location>
</feature>
<feature type="region of interest" description="CPSF4-binding" evidence="1">
    <location>
        <begin position="180"/>
        <end position="215"/>
    </location>
</feature>
<feature type="short sequence motif" description="Nuclear localization signal" evidence="1">
    <location>
        <begin position="34"/>
        <end position="38"/>
    </location>
</feature>
<feature type="short sequence motif" description="Nuclear export signal" evidence="1">
    <location>
        <begin position="137"/>
        <end position="146"/>
    </location>
</feature>
<feature type="non-terminal residue">
    <location>
        <position position="219"/>
    </location>
</feature>
<name>NS1_I67A2</name>
<protein>
    <recommendedName>
        <fullName evidence="1">Non-structural protein 1</fullName>
        <shortName evidence="1">NS1</shortName>
    </recommendedName>
    <alternativeName>
        <fullName evidence="1">NS1A</fullName>
    </alternativeName>
</protein>
<proteinExistence type="inferred from homology"/>
<gene>
    <name evidence="1" type="primary">NS</name>
</gene>
<reference key="1">
    <citation type="submission" date="2007-10" db="EMBL/GenBank/DDBJ databases">
        <title>The NIAID influenza genome sequencing project.</title>
        <authorList>
            <person name="Ghedin E."/>
            <person name="Spiro D."/>
            <person name="Miller N."/>
            <person name="Zaborsky J."/>
            <person name="Feldblyum T."/>
            <person name="Subbu V."/>
            <person name="Shumway M."/>
            <person name="Sparenborg J."/>
            <person name="Groveman L."/>
            <person name="Halpin R."/>
            <person name="Sitz J."/>
            <person name="Koo H."/>
            <person name="Salzberg S.L."/>
            <person name="Webster R.G."/>
            <person name="Hoffmann E."/>
            <person name="Krauss S."/>
            <person name="Naeve C."/>
            <person name="Bao Y."/>
            <person name="Bolotov P."/>
            <person name="Dernovoy D."/>
            <person name="Kiryutin B."/>
            <person name="Lipman D.J."/>
            <person name="Tatusova T."/>
        </authorList>
    </citation>
    <scope>NUCLEOTIDE SEQUENCE [GENOMIC RNA]</scope>
</reference>
<reference key="2">
    <citation type="submission" date="2007-10" db="EMBL/GenBank/DDBJ databases">
        <authorList>
            <consortium name="The NIAID Influenza Genome Sequencing Consortium"/>
        </authorList>
    </citation>
    <scope>NUCLEOTIDE SEQUENCE [GENOMIC RNA]</scope>
</reference>
<evidence type="ECO:0000255" key="1">
    <source>
        <dbReference type="HAMAP-Rule" id="MF_04066"/>
    </source>
</evidence>
<organismHost>
    <name type="scientific">Aves</name>
    <dbReference type="NCBI Taxonomy" id="8782"/>
</organismHost>
<organismHost>
    <name type="scientific">Homo sapiens</name>
    <name type="common">Human</name>
    <dbReference type="NCBI Taxonomy" id="9606"/>
</organismHost>
<organismHost>
    <name type="scientific">Sus scrofa</name>
    <name type="common">Pig</name>
    <dbReference type="NCBI Taxonomy" id="9823"/>
</organismHost>
<accession>A8C8W9</accession>
<organism>
    <name type="scientific">Influenza A virus (strain A/Swine/Wisconsin/1/1967 H1N1)</name>
    <dbReference type="NCBI Taxonomy" id="382855"/>
    <lineage>
        <taxon>Viruses</taxon>
        <taxon>Riboviria</taxon>
        <taxon>Orthornavirae</taxon>
        <taxon>Negarnaviricota</taxon>
        <taxon>Polyploviricotina</taxon>
        <taxon>Insthoviricetes</taxon>
        <taxon>Articulavirales</taxon>
        <taxon>Orthomyxoviridae</taxon>
        <taxon>Alphainfluenzavirus</taxon>
        <taxon>Alphainfluenzavirus influenzae</taxon>
        <taxon>Influenza A virus</taxon>
    </lineage>
</organism>
<keyword id="KW-0025">Alternative splicing</keyword>
<keyword id="KW-1262">Eukaryotic host gene expression shutoff by virus</keyword>
<keyword id="KW-1035">Host cytoplasm</keyword>
<keyword id="KW-1190">Host gene expression shutoff by virus</keyword>
<keyword id="KW-1192">Host mRNA suppression by virus</keyword>
<keyword id="KW-1048">Host nucleus</keyword>
<keyword id="KW-0945">Host-virus interaction</keyword>
<keyword id="KW-1090">Inhibition of host innate immune response by virus</keyword>
<keyword id="KW-1114">Inhibition of host interferon signaling pathway by virus</keyword>
<keyword id="KW-1102">Inhibition of host PKR by virus</keyword>
<keyword id="KW-1103">Inhibition of host pre-mRNA processing by virus</keyword>
<keyword id="KW-1088">Inhibition of host RIG-I by virus</keyword>
<keyword id="KW-1113">Inhibition of host RLR pathway by virus</keyword>
<keyword id="KW-0922">Interferon antiviral system evasion</keyword>
<keyword id="KW-0694">RNA-binding</keyword>
<keyword id="KW-0832">Ubl conjugation</keyword>
<keyword id="KW-0899">Viral immunoevasion</keyword>
<comment type="function">
    <text evidence="1">Inhibits post-transcriptional processing of cellular pre-mRNA, by binding and inhibiting two cellular proteins that are required for the 3'-end processing of cellular pre-mRNAs: the 30 kDa cleavage and polyadenylation specificity factor/CPSF4 and the poly(A)-binding protein 2/PABPN1. In turn, unprocessed 3' end pre-mRNAs accumulate in the host nucleus and are no longer exported to the cytoplasm. Cellular protein synthesis is thereby shut off very early after virus infection. Viral protein synthesis is not affected by the inhibition of the cellular 3' end processing machinery because the poly(A) tails of viral mRNAs are produced by the viral polymerase through a stuttering mechanism. Prevents the establishment of the cellular antiviral state by inhibiting TRIM25-mediated RIGI ubiquitination, which normally triggers the antiviral transduction signal that leads to the activation of type I IFN genes by transcription factors IRF3 and IRF7. Also binds poly(A) and U6 snRNA. Inhibits the integrated stress response (ISR) in the infected cell by blocking dsRNA binding by EIF2AK2/PKR and further phosphorylation of EIF2S1/EIF-2ALPHA. Stress granule formation is thus inhibited, which allows protein synthesis and viral replication.</text>
</comment>
<comment type="subunit">
    <text evidence="1">Homodimer. Interacts with host TRIM25 (via coiled coil); this interaction specifically inhibits TRIM25 multimerization and TRIM25-mediated RIGI CARD ubiquitination. Interacts with human EIF2AK2/PKR, CPSF4, IVNS1ABP and PABPN1.</text>
</comment>
<comment type="subcellular location">
    <subcellularLocation>
        <location evidence="1">Host nucleus</location>
    </subcellularLocation>
    <subcellularLocation>
        <location evidence="1">Host cytoplasm</location>
    </subcellularLocation>
    <text evidence="1">In uninfected, transfected cells, NS1 is localized in the nucleus. Only in virus infected cells, the nuclear export signal is unveiled, presumably by a viral protein, and a fraction of NS1 is exported in the cytoplasm.</text>
</comment>
<comment type="alternative products">
    <event type="alternative splicing"/>
    <isoform>
        <id>A8C8W9-1</id>
        <name>NS1</name>
        <sequence type="displayed"/>
    </isoform>
    <isoform>
        <id>A8C8W8-1</id>
        <name>NEP</name>
        <name>NS2</name>
        <sequence type="external"/>
    </isoform>
</comment>
<comment type="domain">
    <text evidence="1">The dsRNA-binding region is required for suppression of RNA silencing.</text>
</comment>
<comment type="PTM">
    <text evidence="1">Upon interferon induction, ISGylated via host HERC5; this results in the impairment of NS1 interaction with RNA targets due to its inability to form homodimers and to interact with host EIF2AK2/PKR.</text>
</comment>
<comment type="similarity">
    <text evidence="1">Belongs to the influenza A viruses NS1 family.</text>
</comment>
<dbReference type="EMBL" id="CY026295">
    <property type="protein sequence ID" value="ABV82589.1"/>
    <property type="molecule type" value="Viral_cRNA"/>
</dbReference>
<dbReference type="SMR" id="A8C8W9"/>
<dbReference type="Proteomes" id="UP000116872">
    <property type="component" value="Genome"/>
</dbReference>
<dbReference type="GO" id="GO:0030430">
    <property type="term" value="C:host cell cytoplasm"/>
    <property type="evidence" value="ECO:0007669"/>
    <property type="project" value="UniProtKB-SubCell"/>
</dbReference>
<dbReference type="GO" id="GO:0042025">
    <property type="term" value="C:host cell nucleus"/>
    <property type="evidence" value="ECO:0007669"/>
    <property type="project" value="UniProtKB-SubCell"/>
</dbReference>
<dbReference type="GO" id="GO:0030291">
    <property type="term" value="F:protein serine/threonine kinase inhibitor activity"/>
    <property type="evidence" value="ECO:0007669"/>
    <property type="project" value="UniProtKB-KW"/>
</dbReference>
<dbReference type="GO" id="GO:0003723">
    <property type="term" value="F:RNA binding"/>
    <property type="evidence" value="ECO:0007669"/>
    <property type="project" value="UniProtKB-KW"/>
</dbReference>
<dbReference type="GO" id="GO:0039540">
    <property type="term" value="P:symbiont-mediated suppression of host cytoplasmic pattern recognition receptor signaling pathway via inhibition of RIG-I activity"/>
    <property type="evidence" value="ECO:0007669"/>
    <property type="project" value="UniProtKB-KW"/>
</dbReference>
<dbReference type="GO" id="GO:0039657">
    <property type="term" value="P:symbiont-mediated suppression of host gene expression"/>
    <property type="evidence" value="ECO:0007669"/>
    <property type="project" value="UniProtKB-KW"/>
</dbReference>
<dbReference type="GO" id="GO:0039524">
    <property type="term" value="P:symbiont-mediated suppression of host mRNA processing"/>
    <property type="evidence" value="ECO:0007669"/>
    <property type="project" value="UniProtKB-KW"/>
</dbReference>
<dbReference type="GO" id="GO:0039580">
    <property type="term" value="P:symbiont-mediated suppression of host PKR/eIFalpha signaling"/>
    <property type="evidence" value="ECO:0007669"/>
    <property type="project" value="UniProtKB-KW"/>
</dbReference>
<dbReference type="GO" id="GO:0039502">
    <property type="term" value="P:symbiont-mediated suppression of host type I interferon-mediated signaling pathway"/>
    <property type="evidence" value="ECO:0007669"/>
    <property type="project" value="UniProtKB-KW"/>
</dbReference>
<dbReference type="FunFam" id="1.10.287.10:FF:000001">
    <property type="entry name" value="Non-structural protein 1"/>
    <property type="match status" value="1"/>
</dbReference>
<dbReference type="Gene3D" id="3.30.420.330">
    <property type="entry name" value="Influenza virus non-structural protein, effector domain"/>
    <property type="match status" value="1"/>
</dbReference>
<dbReference type="Gene3D" id="1.10.287.10">
    <property type="entry name" value="S15/NS1, RNA-binding"/>
    <property type="match status" value="1"/>
</dbReference>
<dbReference type="HAMAP" id="MF_04066">
    <property type="entry name" value="INFV_NS1"/>
    <property type="match status" value="1"/>
</dbReference>
<dbReference type="InterPro" id="IPR004208">
    <property type="entry name" value="NS1"/>
</dbReference>
<dbReference type="InterPro" id="IPR000256">
    <property type="entry name" value="NS1A"/>
</dbReference>
<dbReference type="InterPro" id="IPR038064">
    <property type="entry name" value="NS1A_effect_dom-like_sf"/>
</dbReference>
<dbReference type="InterPro" id="IPR009068">
    <property type="entry name" value="uS15_NS1_RNA-bd_sf"/>
</dbReference>
<dbReference type="Pfam" id="PF00600">
    <property type="entry name" value="Flu_NS1"/>
    <property type="match status" value="1"/>
</dbReference>
<dbReference type="SUPFAM" id="SSF143021">
    <property type="entry name" value="Ns1 effector domain-like"/>
    <property type="match status" value="1"/>
</dbReference>
<dbReference type="SUPFAM" id="SSF47060">
    <property type="entry name" value="S15/NS1 RNA-binding domain"/>
    <property type="match status" value="1"/>
</dbReference>